<reference key="1">
    <citation type="journal article" date="2005" name="Science">
        <title>Extensive DNA inversions in the B. fragilis genome control variable gene expression.</title>
        <authorList>
            <person name="Cerdeno-Tarraga A.-M."/>
            <person name="Patrick S."/>
            <person name="Crossman L.C."/>
            <person name="Blakely G."/>
            <person name="Abratt V."/>
            <person name="Lennard N."/>
            <person name="Poxton I."/>
            <person name="Duerden B."/>
            <person name="Harris B."/>
            <person name="Quail M.A."/>
            <person name="Barron A."/>
            <person name="Clark L."/>
            <person name="Corton C."/>
            <person name="Doggett J."/>
            <person name="Holden M.T.G."/>
            <person name="Larke N."/>
            <person name="Line A."/>
            <person name="Lord A."/>
            <person name="Norbertczak H."/>
            <person name="Ormond D."/>
            <person name="Price C."/>
            <person name="Rabbinowitsch E."/>
            <person name="Woodward J."/>
            <person name="Barrell B.G."/>
            <person name="Parkhill J."/>
        </authorList>
    </citation>
    <scope>NUCLEOTIDE SEQUENCE [LARGE SCALE GENOMIC DNA]</scope>
    <source>
        <strain>ATCC 25285 / DSM 2151 / CCUG 4856 / JCM 11019 / LMG 10263 / NCTC 9343 / Onslow / VPI 2553 / EN-2</strain>
    </source>
</reference>
<keyword id="KW-0460">Magnesium</keyword>
<keyword id="KW-0479">Metal-binding</keyword>
<keyword id="KW-0784">Thiamine biosynthesis</keyword>
<keyword id="KW-0808">Transferase</keyword>
<protein>
    <recommendedName>
        <fullName evidence="1">Thiamine-phosphate synthase</fullName>
        <shortName evidence="1">TP synthase</shortName>
        <shortName evidence="1">TPS</shortName>
        <ecNumber evidence="1">2.5.1.3</ecNumber>
    </recommendedName>
    <alternativeName>
        <fullName evidence="1">Thiamine-phosphate pyrophosphorylase</fullName>
        <shortName evidence="1">TMP pyrophosphorylase</shortName>
        <shortName evidence="1">TMP-PPase</shortName>
    </alternativeName>
</protein>
<proteinExistence type="inferred from homology"/>
<accession>Q5LCA7</accession>
<feature type="chain" id="PRO_1000008125" description="Thiamine-phosphate synthase">
    <location>
        <begin position="1"/>
        <end position="204"/>
    </location>
</feature>
<feature type="binding site" evidence="1">
    <location>
        <begin position="32"/>
        <end position="36"/>
    </location>
    <ligand>
        <name>4-amino-2-methyl-5-(diphosphooxymethyl)pyrimidine</name>
        <dbReference type="ChEBI" id="CHEBI:57841"/>
    </ligand>
</feature>
<feature type="binding site" evidence="1">
    <location>
        <position position="64"/>
    </location>
    <ligand>
        <name>4-amino-2-methyl-5-(diphosphooxymethyl)pyrimidine</name>
        <dbReference type="ChEBI" id="CHEBI:57841"/>
    </ligand>
</feature>
<feature type="binding site" evidence="1">
    <location>
        <position position="65"/>
    </location>
    <ligand>
        <name>Mg(2+)</name>
        <dbReference type="ChEBI" id="CHEBI:18420"/>
    </ligand>
</feature>
<feature type="binding site" evidence="1">
    <location>
        <position position="84"/>
    </location>
    <ligand>
        <name>Mg(2+)</name>
        <dbReference type="ChEBI" id="CHEBI:18420"/>
    </ligand>
</feature>
<feature type="binding site" evidence="1">
    <location>
        <position position="103"/>
    </location>
    <ligand>
        <name>4-amino-2-methyl-5-(diphosphooxymethyl)pyrimidine</name>
        <dbReference type="ChEBI" id="CHEBI:57841"/>
    </ligand>
</feature>
<feature type="binding site" evidence="1">
    <location>
        <begin position="129"/>
        <end position="131"/>
    </location>
    <ligand>
        <name>2-[(2R,5Z)-2-carboxy-4-methylthiazol-5(2H)-ylidene]ethyl phosphate</name>
        <dbReference type="ChEBI" id="CHEBI:62899"/>
    </ligand>
</feature>
<feature type="binding site" evidence="1">
    <location>
        <position position="132"/>
    </location>
    <ligand>
        <name>4-amino-2-methyl-5-(diphosphooxymethyl)pyrimidine</name>
        <dbReference type="ChEBI" id="CHEBI:57841"/>
    </ligand>
</feature>
<feature type="binding site" evidence="1">
    <location>
        <position position="165"/>
    </location>
    <ligand>
        <name>2-[(2R,5Z)-2-carboxy-4-methylthiazol-5(2H)-ylidene]ethyl phosphate</name>
        <dbReference type="ChEBI" id="CHEBI:62899"/>
    </ligand>
</feature>
<organism>
    <name type="scientific">Bacteroides fragilis (strain ATCC 25285 / DSM 2151 / CCUG 4856 / JCM 11019 / LMG 10263 / NCTC 9343 / Onslow / VPI 2553 / EN-2)</name>
    <dbReference type="NCBI Taxonomy" id="272559"/>
    <lineage>
        <taxon>Bacteria</taxon>
        <taxon>Pseudomonadati</taxon>
        <taxon>Bacteroidota</taxon>
        <taxon>Bacteroidia</taxon>
        <taxon>Bacteroidales</taxon>
        <taxon>Bacteroidaceae</taxon>
        <taxon>Bacteroides</taxon>
    </lineage>
</organism>
<gene>
    <name evidence="1" type="primary">thiE</name>
    <name type="ordered locus">BF2558</name>
</gene>
<dbReference type="EC" id="2.5.1.3" evidence="1"/>
<dbReference type="EMBL" id="CR626927">
    <property type="protein sequence ID" value="CAH08258.1"/>
    <property type="molecule type" value="Genomic_DNA"/>
</dbReference>
<dbReference type="RefSeq" id="WP_005793502.1">
    <property type="nucleotide sequence ID" value="NZ_UFTH01000001.1"/>
</dbReference>
<dbReference type="SMR" id="Q5LCA7"/>
<dbReference type="PaxDb" id="272559-BF9343_2477"/>
<dbReference type="KEGG" id="bfs:BF9343_2477"/>
<dbReference type="eggNOG" id="COG0352">
    <property type="taxonomic scope" value="Bacteria"/>
</dbReference>
<dbReference type="HOGENOM" id="CLU_018272_3_2_10"/>
<dbReference type="UniPathway" id="UPA00060">
    <property type="reaction ID" value="UER00141"/>
</dbReference>
<dbReference type="Proteomes" id="UP000006731">
    <property type="component" value="Chromosome"/>
</dbReference>
<dbReference type="GO" id="GO:0005737">
    <property type="term" value="C:cytoplasm"/>
    <property type="evidence" value="ECO:0007669"/>
    <property type="project" value="TreeGrafter"/>
</dbReference>
<dbReference type="GO" id="GO:0000287">
    <property type="term" value="F:magnesium ion binding"/>
    <property type="evidence" value="ECO:0007669"/>
    <property type="project" value="UniProtKB-UniRule"/>
</dbReference>
<dbReference type="GO" id="GO:0004789">
    <property type="term" value="F:thiamine-phosphate diphosphorylase activity"/>
    <property type="evidence" value="ECO:0007669"/>
    <property type="project" value="UniProtKB-UniRule"/>
</dbReference>
<dbReference type="GO" id="GO:0009228">
    <property type="term" value="P:thiamine biosynthetic process"/>
    <property type="evidence" value="ECO:0007669"/>
    <property type="project" value="UniProtKB-KW"/>
</dbReference>
<dbReference type="GO" id="GO:0009229">
    <property type="term" value="P:thiamine diphosphate biosynthetic process"/>
    <property type="evidence" value="ECO:0007669"/>
    <property type="project" value="UniProtKB-UniRule"/>
</dbReference>
<dbReference type="CDD" id="cd00564">
    <property type="entry name" value="TMP_TenI"/>
    <property type="match status" value="1"/>
</dbReference>
<dbReference type="Gene3D" id="3.20.20.70">
    <property type="entry name" value="Aldolase class I"/>
    <property type="match status" value="1"/>
</dbReference>
<dbReference type="HAMAP" id="MF_00097">
    <property type="entry name" value="TMP_synthase"/>
    <property type="match status" value="1"/>
</dbReference>
<dbReference type="InterPro" id="IPR013785">
    <property type="entry name" value="Aldolase_TIM"/>
</dbReference>
<dbReference type="InterPro" id="IPR036206">
    <property type="entry name" value="ThiamineP_synth_sf"/>
</dbReference>
<dbReference type="InterPro" id="IPR022998">
    <property type="entry name" value="ThiamineP_synth_TenI"/>
</dbReference>
<dbReference type="InterPro" id="IPR034291">
    <property type="entry name" value="TMP_synthase"/>
</dbReference>
<dbReference type="NCBIfam" id="NF000736">
    <property type="entry name" value="PRK00043.2-3"/>
    <property type="match status" value="1"/>
</dbReference>
<dbReference type="NCBIfam" id="TIGR00693">
    <property type="entry name" value="thiE"/>
    <property type="match status" value="1"/>
</dbReference>
<dbReference type="PANTHER" id="PTHR20857">
    <property type="entry name" value="THIAMINE-PHOSPHATE PYROPHOSPHORYLASE"/>
    <property type="match status" value="1"/>
</dbReference>
<dbReference type="PANTHER" id="PTHR20857:SF15">
    <property type="entry name" value="THIAMINE-PHOSPHATE SYNTHASE"/>
    <property type="match status" value="1"/>
</dbReference>
<dbReference type="Pfam" id="PF02581">
    <property type="entry name" value="TMP-TENI"/>
    <property type="match status" value="1"/>
</dbReference>
<dbReference type="SUPFAM" id="SSF51391">
    <property type="entry name" value="Thiamin phosphate synthase"/>
    <property type="match status" value="1"/>
</dbReference>
<comment type="function">
    <text evidence="1">Condenses 4-methyl-5-(beta-hydroxyethyl)thiazole monophosphate (THZ-P) and 2-methyl-4-amino-5-hydroxymethyl pyrimidine pyrophosphate (HMP-PP) to form thiamine monophosphate (TMP).</text>
</comment>
<comment type="catalytic activity">
    <reaction evidence="1">
        <text>2-[(2R,5Z)-2-carboxy-4-methylthiazol-5(2H)-ylidene]ethyl phosphate + 4-amino-2-methyl-5-(diphosphooxymethyl)pyrimidine + 2 H(+) = thiamine phosphate + CO2 + diphosphate</text>
        <dbReference type="Rhea" id="RHEA:47844"/>
        <dbReference type="ChEBI" id="CHEBI:15378"/>
        <dbReference type="ChEBI" id="CHEBI:16526"/>
        <dbReference type="ChEBI" id="CHEBI:33019"/>
        <dbReference type="ChEBI" id="CHEBI:37575"/>
        <dbReference type="ChEBI" id="CHEBI:57841"/>
        <dbReference type="ChEBI" id="CHEBI:62899"/>
        <dbReference type="EC" id="2.5.1.3"/>
    </reaction>
</comment>
<comment type="catalytic activity">
    <reaction evidence="1">
        <text>2-(2-carboxy-4-methylthiazol-5-yl)ethyl phosphate + 4-amino-2-methyl-5-(diphosphooxymethyl)pyrimidine + 2 H(+) = thiamine phosphate + CO2 + diphosphate</text>
        <dbReference type="Rhea" id="RHEA:47848"/>
        <dbReference type="ChEBI" id="CHEBI:15378"/>
        <dbReference type="ChEBI" id="CHEBI:16526"/>
        <dbReference type="ChEBI" id="CHEBI:33019"/>
        <dbReference type="ChEBI" id="CHEBI:37575"/>
        <dbReference type="ChEBI" id="CHEBI:57841"/>
        <dbReference type="ChEBI" id="CHEBI:62890"/>
        <dbReference type="EC" id="2.5.1.3"/>
    </reaction>
</comment>
<comment type="catalytic activity">
    <reaction evidence="1">
        <text>4-methyl-5-(2-phosphooxyethyl)-thiazole + 4-amino-2-methyl-5-(diphosphooxymethyl)pyrimidine + H(+) = thiamine phosphate + diphosphate</text>
        <dbReference type="Rhea" id="RHEA:22328"/>
        <dbReference type="ChEBI" id="CHEBI:15378"/>
        <dbReference type="ChEBI" id="CHEBI:33019"/>
        <dbReference type="ChEBI" id="CHEBI:37575"/>
        <dbReference type="ChEBI" id="CHEBI:57841"/>
        <dbReference type="ChEBI" id="CHEBI:58296"/>
        <dbReference type="EC" id="2.5.1.3"/>
    </reaction>
</comment>
<comment type="cofactor">
    <cofactor evidence="1">
        <name>Mg(2+)</name>
        <dbReference type="ChEBI" id="CHEBI:18420"/>
    </cofactor>
    <text evidence="1">Binds 1 Mg(2+) ion per subunit.</text>
</comment>
<comment type="pathway">
    <text evidence="1">Cofactor biosynthesis; thiamine diphosphate biosynthesis; thiamine phosphate from 4-amino-2-methyl-5-diphosphomethylpyrimidine and 4-methyl-5-(2-phosphoethyl)-thiazole: step 1/1.</text>
</comment>
<comment type="similarity">
    <text evidence="1">Belongs to the thiamine-phosphate synthase family.</text>
</comment>
<name>THIE_BACFN</name>
<sequence>MLSLQFITHQTENYSYLESARMALEGGCKWIQLRMKEASPEEVEAVALQLKPLCKAKEAILILDDHVELAKKLEVDGVHLGKKDMPIGEARQMLGEAFIIGGTANTFEDVKLHHAAGADYLGIGPFRFTTTKKNLSPVLGLEGYTSILAQMNEAGIRIPVVAIGGIVAEDIPAIMETGVNGIALSGAILQAPDPVEETKRILNI</sequence>
<evidence type="ECO:0000255" key="1">
    <source>
        <dbReference type="HAMAP-Rule" id="MF_00097"/>
    </source>
</evidence>